<dbReference type="PIR" id="A02438">
    <property type="entry name" value="HBGSI"/>
</dbReference>
<dbReference type="PDB" id="1A4F">
    <property type="method" value="X-ray"/>
    <property type="resolution" value="2.00 A"/>
    <property type="chains" value="B=1-146"/>
</dbReference>
<dbReference type="PDB" id="1C40">
    <property type="method" value="X-ray"/>
    <property type="resolution" value="2.30 A"/>
    <property type="chains" value="B=1-146"/>
</dbReference>
<dbReference type="PDB" id="1HV4">
    <property type="method" value="X-ray"/>
    <property type="resolution" value="2.80 A"/>
    <property type="chains" value="B/D/F/H=1-146"/>
</dbReference>
<dbReference type="PDBsum" id="1A4F"/>
<dbReference type="PDBsum" id="1C40"/>
<dbReference type="PDBsum" id="1HV4"/>
<dbReference type="SMR" id="P02118"/>
<dbReference type="MINT" id="P02118"/>
<dbReference type="EvolutionaryTrace" id="P02118"/>
<dbReference type="GO" id="GO:0072562">
    <property type="term" value="C:blood microparticle"/>
    <property type="evidence" value="ECO:0007669"/>
    <property type="project" value="TreeGrafter"/>
</dbReference>
<dbReference type="GO" id="GO:0031838">
    <property type="term" value="C:haptoglobin-hemoglobin complex"/>
    <property type="evidence" value="ECO:0007669"/>
    <property type="project" value="TreeGrafter"/>
</dbReference>
<dbReference type="GO" id="GO:0005833">
    <property type="term" value="C:hemoglobin complex"/>
    <property type="evidence" value="ECO:0007669"/>
    <property type="project" value="InterPro"/>
</dbReference>
<dbReference type="GO" id="GO:0031720">
    <property type="term" value="F:haptoglobin binding"/>
    <property type="evidence" value="ECO:0007669"/>
    <property type="project" value="TreeGrafter"/>
</dbReference>
<dbReference type="GO" id="GO:0020037">
    <property type="term" value="F:heme binding"/>
    <property type="evidence" value="ECO:0007669"/>
    <property type="project" value="InterPro"/>
</dbReference>
<dbReference type="GO" id="GO:0046872">
    <property type="term" value="F:metal ion binding"/>
    <property type="evidence" value="ECO:0007669"/>
    <property type="project" value="UniProtKB-KW"/>
</dbReference>
<dbReference type="GO" id="GO:0043177">
    <property type="term" value="F:organic acid binding"/>
    <property type="evidence" value="ECO:0007669"/>
    <property type="project" value="TreeGrafter"/>
</dbReference>
<dbReference type="GO" id="GO:0019825">
    <property type="term" value="F:oxygen binding"/>
    <property type="evidence" value="ECO:0007669"/>
    <property type="project" value="InterPro"/>
</dbReference>
<dbReference type="GO" id="GO:0005344">
    <property type="term" value="F:oxygen carrier activity"/>
    <property type="evidence" value="ECO:0007669"/>
    <property type="project" value="UniProtKB-KW"/>
</dbReference>
<dbReference type="GO" id="GO:0004601">
    <property type="term" value="F:peroxidase activity"/>
    <property type="evidence" value="ECO:0007669"/>
    <property type="project" value="TreeGrafter"/>
</dbReference>
<dbReference type="GO" id="GO:0042744">
    <property type="term" value="P:hydrogen peroxide catabolic process"/>
    <property type="evidence" value="ECO:0007669"/>
    <property type="project" value="TreeGrafter"/>
</dbReference>
<dbReference type="CDD" id="cd08925">
    <property type="entry name" value="Hb-beta-like"/>
    <property type="match status" value="1"/>
</dbReference>
<dbReference type="FunFam" id="1.10.490.10:FF:000001">
    <property type="entry name" value="Hemoglobin subunit beta"/>
    <property type="match status" value="1"/>
</dbReference>
<dbReference type="Gene3D" id="1.10.490.10">
    <property type="entry name" value="Globins"/>
    <property type="match status" value="1"/>
</dbReference>
<dbReference type="InterPro" id="IPR000971">
    <property type="entry name" value="Globin"/>
</dbReference>
<dbReference type="InterPro" id="IPR009050">
    <property type="entry name" value="Globin-like_sf"/>
</dbReference>
<dbReference type="InterPro" id="IPR012292">
    <property type="entry name" value="Globin/Proto"/>
</dbReference>
<dbReference type="InterPro" id="IPR002337">
    <property type="entry name" value="Hemoglobin_b"/>
</dbReference>
<dbReference type="InterPro" id="IPR050056">
    <property type="entry name" value="Hemoglobin_oxygen_transport"/>
</dbReference>
<dbReference type="PANTHER" id="PTHR11442">
    <property type="entry name" value="HEMOGLOBIN FAMILY MEMBER"/>
    <property type="match status" value="1"/>
</dbReference>
<dbReference type="PANTHER" id="PTHR11442:SF7">
    <property type="entry name" value="HEMOGLOBIN SUBUNIT EPSILON"/>
    <property type="match status" value="1"/>
</dbReference>
<dbReference type="Pfam" id="PF00042">
    <property type="entry name" value="Globin"/>
    <property type="match status" value="1"/>
</dbReference>
<dbReference type="PRINTS" id="PR00814">
    <property type="entry name" value="BETAHAEM"/>
</dbReference>
<dbReference type="SUPFAM" id="SSF46458">
    <property type="entry name" value="Globin-like"/>
    <property type="match status" value="1"/>
</dbReference>
<dbReference type="PROSITE" id="PS01033">
    <property type="entry name" value="GLOBIN"/>
    <property type="match status" value="1"/>
</dbReference>
<reference key="1">
    <citation type="journal article" date="1982" name="Hoppe-Seyler's Z. Physiol. Chem.">
        <title>Hemoglobins, XLVII. Hemoglobins of the bar-headed goose (Anser indicus): primary structure and physiology of respiration, systematic and evolution.</title>
        <authorList>
            <person name="Oberthur W."/>
            <person name="Braunitzer G."/>
            <person name="Wurdinger I."/>
        </authorList>
    </citation>
    <scope>PROTEIN SEQUENCE</scope>
</reference>
<reference key="2">
    <citation type="journal article" date="1996" name="J. Mol. Biol.">
        <title>The crystal structure of a high oxygen affinity species of haemoglobin (bar-headed goose haemoglobin in the oxy form).</title>
        <authorList>
            <person name="Zhang J."/>
            <person name="Hua Z."/>
            <person name="Tame J.R.H."/>
            <person name="Lu G."/>
            <person name="Zhang R."/>
            <person name="Gu X."/>
        </authorList>
    </citation>
    <scope>X-RAY CRYSTALLOGRAPHY (2.0 ANGSTROMS)</scope>
</reference>
<organism>
    <name type="scientific">Anser indicus</name>
    <name type="common">Bar-headed goose</name>
    <name type="synonym">Anas indica</name>
    <dbReference type="NCBI Taxonomy" id="8846"/>
    <lineage>
        <taxon>Eukaryota</taxon>
        <taxon>Metazoa</taxon>
        <taxon>Chordata</taxon>
        <taxon>Craniata</taxon>
        <taxon>Vertebrata</taxon>
        <taxon>Euteleostomi</taxon>
        <taxon>Archelosauria</taxon>
        <taxon>Archosauria</taxon>
        <taxon>Dinosauria</taxon>
        <taxon>Saurischia</taxon>
        <taxon>Theropoda</taxon>
        <taxon>Coelurosauria</taxon>
        <taxon>Aves</taxon>
        <taxon>Neognathae</taxon>
        <taxon>Galloanserae</taxon>
        <taxon>Anseriformes</taxon>
        <taxon>Anatidae</taxon>
        <taxon>Anserinae</taxon>
        <taxon>Anser</taxon>
    </lineage>
</organism>
<feature type="chain" id="PRO_0000052873" description="Hemoglobin subunit beta">
    <location>
        <begin position="1"/>
        <end position="146"/>
    </location>
</feature>
<feature type="domain" description="Globin" evidence="1">
    <location>
        <begin position="2"/>
        <end position="146"/>
    </location>
</feature>
<feature type="binding site" description="distal binding residue">
    <location>
        <position position="63"/>
    </location>
    <ligand>
        <name>heme b</name>
        <dbReference type="ChEBI" id="CHEBI:60344"/>
    </ligand>
    <ligandPart>
        <name>Fe</name>
        <dbReference type="ChEBI" id="CHEBI:18248"/>
    </ligandPart>
</feature>
<feature type="binding site" description="proximal binding residue">
    <location>
        <position position="92"/>
    </location>
    <ligand>
        <name>heme b</name>
        <dbReference type="ChEBI" id="CHEBI:60344"/>
    </ligand>
    <ligandPart>
        <name>Fe</name>
        <dbReference type="ChEBI" id="CHEBI:18248"/>
    </ligandPart>
</feature>
<feature type="helix" evidence="2">
    <location>
        <begin position="5"/>
        <end position="15"/>
    </location>
</feature>
<feature type="helix" evidence="2">
    <location>
        <begin position="20"/>
        <end position="34"/>
    </location>
</feature>
<feature type="helix" evidence="2">
    <location>
        <begin position="36"/>
        <end position="45"/>
    </location>
</feature>
<feature type="helix" evidence="2">
    <location>
        <begin position="51"/>
        <end position="55"/>
    </location>
</feature>
<feature type="helix" evidence="2">
    <location>
        <begin position="58"/>
        <end position="76"/>
    </location>
</feature>
<feature type="turn" evidence="2">
    <location>
        <begin position="77"/>
        <end position="79"/>
    </location>
</feature>
<feature type="helix" evidence="2">
    <location>
        <begin position="81"/>
        <end position="94"/>
    </location>
</feature>
<feature type="helix" evidence="2">
    <location>
        <begin position="101"/>
        <end position="118"/>
    </location>
</feature>
<feature type="helix" evidence="2">
    <location>
        <begin position="119"/>
        <end position="121"/>
    </location>
</feature>
<feature type="helix" evidence="2">
    <location>
        <begin position="124"/>
        <end position="141"/>
    </location>
</feature>
<feature type="turn" evidence="3">
    <location>
        <begin position="143"/>
        <end position="145"/>
    </location>
</feature>
<accession>P02118</accession>
<sequence>VHWSAEEKQLITGLWGKVNVADCGAEALARLLIVYPWTQRFFSSFGNLSSPTAILGNPMVRAHGKKVLTSFGDAVKNLDNIKNTFAQLSELHCDKLHVDPENFRLLGDILIIVLAAHFAKEFTPDCQAAWQKLVRVVAHALARKYH</sequence>
<proteinExistence type="evidence at protein level"/>
<gene>
    <name type="primary">HBB</name>
</gene>
<keyword id="KW-0002">3D-structure</keyword>
<keyword id="KW-0903">Direct protein sequencing</keyword>
<keyword id="KW-0349">Heme</keyword>
<keyword id="KW-0408">Iron</keyword>
<keyword id="KW-0479">Metal-binding</keyword>
<keyword id="KW-0561">Oxygen transport</keyword>
<keyword id="KW-0813">Transport</keyword>
<protein>
    <recommendedName>
        <fullName>Hemoglobin subunit beta</fullName>
    </recommendedName>
    <alternativeName>
        <fullName>Beta-globin</fullName>
    </alternativeName>
    <alternativeName>
        <fullName>Hemoglobin beta chain</fullName>
    </alternativeName>
</protein>
<evidence type="ECO:0000255" key="1">
    <source>
        <dbReference type="PROSITE-ProRule" id="PRU00238"/>
    </source>
</evidence>
<evidence type="ECO:0007829" key="2">
    <source>
        <dbReference type="PDB" id="1A4F"/>
    </source>
</evidence>
<evidence type="ECO:0007829" key="3">
    <source>
        <dbReference type="PDB" id="1HV4"/>
    </source>
</evidence>
<name>HBB_ANSIN</name>
<comment type="function">
    <text>Involved in oxygen transport from the lung to the various peripheral tissues.</text>
</comment>
<comment type="subunit">
    <text>Heterotetramer of two alpha chains and two beta chains.</text>
</comment>
<comment type="tissue specificity">
    <text>Red blood cells.</text>
</comment>
<comment type="similarity">
    <text evidence="1">Belongs to the globin family.</text>
</comment>